<evidence type="ECO:0000255" key="1">
    <source>
        <dbReference type="HAMAP-Rule" id="MF_01343"/>
    </source>
</evidence>
<evidence type="ECO:0000305" key="2"/>
<protein>
    <recommendedName>
        <fullName evidence="1">Small ribosomal subunit protein uS15</fullName>
    </recommendedName>
    <alternativeName>
        <fullName evidence="2">30S ribosomal protein S15</fullName>
    </alternativeName>
</protein>
<name>RS15_SHIF8</name>
<keyword id="KW-0687">Ribonucleoprotein</keyword>
<keyword id="KW-0689">Ribosomal protein</keyword>
<keyword id="KW-0694">RNA-binding</keyword>
<keyword id="KW-0699">rRNA-binding</keyword>
<sequence length="89" mass="10269">MSLSTEATAKIVSEFGRDANDTGSTEVQVALLTAQINHLQGHFAEHKKDHHSRRGLLRMVSQRRKLLDYLKRKDVARYTQLIERLGLRR</sequence>
<reference key="1">
    <citation type="journal article" date="2006" name="BMC Genomics">
        <title>Complete genome sequence of Shigella flexneri 5b and comparison with Shigella flexneri 2a.</title>
        <authorList>
            <person name="Nie H."/>
            <person name="Yang F."/>
            <person name="Zhang X."/>
            <person name="Yang J."/>
            <person name="Chen L."/>
            <person name="Wang J."/>
            <person name="Xiong Z."/>
            <person name="Peng J."/>
            <person name="Sun L."/>
            <person name="Dong J."/>
            <person name="Xue Y."/>
            <person name="Xu X."/>
            <person name="Chen S."/>
            <person name="Yao Z."/>
            <person name="Shen Y."/>
            <person name="Jin Q."/>
        </authorList>
    </citation>
    <scope>NUCLEOTIDE SEQUENCE [LARGE SCALE GENOMIC DNA]</scope>
    <source>
        <strain>8401</strain>
    </source>
</reference>
<comment type="function">
    <text evidence="1">One of the primary rRNA binding proteins, it binds directly to 16S rRNA where it helps nucleate assembly of the platform of the 30S subunit by binding and bridging several RNA helices of the 16S rRNA.</text>
</comment>
<comment type="function">
    <text evidence="1">Forms an intersubunit bridge (bridge B4) with the 23S rRNA of the 50S subunit in the ribosome.</text>
</comment>
<comment type="subunit">
    <text evidence="1">Part of the 30S ribosomal subunit. Forms a bridge to the 50S subunit in the 70S ribosome, contacting the 23S rRNA.</text>
</comment>
<comment type="similarity">
    <text evidence="1">Belongs to the universal ribosomal protein uS15 family.</text>
</comment>
<feature type="chain" id="PRO_1000054875" description="Small ribosomal subunit protein uS15">
    <location>
        <begin position="1"/>
        <end position="89"/>
    </location>
</feature>
<organism>
    <name type="scientific">Shigella flexneri serotype 5b (strain 8401)</name>
    <dbReference type="NCBI Taxonomy" id="373384"/>
    <lineage>
        <taxon>Bacteria</taxon>
        <taxon>Pseudomonadati</taxon>
        <taxon>Pseudomonadota</taxon>
        <taxon>Gammaproteobacteria</taxon>
        <taxon>Enterobacterales</taxon>
        <taxon>Enterobacteriaceae</taxon>
        <taxon>Shigella</taxon>
    </lineage>
</organism>
<dbReference type="EMBL" id="CP000266">
    <property type="protein sequence ID" value="ABF05249.1"/>
    <property type="molecule type" value="Genomic_DNA"/>
</dbReference>
<dbReference type="RefSeq" id="WP_000059466.1">
    <property type="nucleotide sequence ID" value="NC_008258.1"/>
</dbReference>
<dbReference type="SMR" id="Q0T0B6"/>
<dbReference type="GeneID" id="93778818"/>
<dbReference type="KEGG" id="sfv:SFV_3195"/>
<dbReference type="HOGENOM" id="CLU_148518_0_0_6"/>
<dbReference type="Proteomes" id="UP000000659">
    <property type="component" value="Chromosome"/>
</dbReference>
<dbReference type="GO" id="GO:0022627">
    <property type="term" value="C:cytosolic small ribosomal subunit"/>
    <property type="evidence" value="ECO:0007669"/>
    <property type="project" value="TreeGrafter"/>
</dbReference>
<dbReference type="GO" id="GO:0019843">
    <property type="term" value="F:rRNA binding"/>
    <property type="evidence" value="ECO:0007669"/>
    <property type="project" value="UniProtKB-UniRule"/>
</dbReference>
<dbReference type="GO" id="GO:0003735">
    <property type="term" value="F:structural constituent of ribosome"/>
    <property type="evidence" value="ECO:0007669"/>
    <property type="project" value="InterPro"/>
</dbReference>
<dbReference type="GO" id="GO:0006412">
    <property type="term" value="P:translation"/>
    <property type="evidence" value="ECO:0007669"/>
    <property type="project" value="UniProtKB-UniRule"/>
</dbReference>
<dbReference type="CDD" id="cd00353">
    <property type="entry name" value="Ribosomal_S15p_S13e"/>
    <property type="match status" value="1"/>
</dbReference>
<dbReference type="FunFam" id="1.10.287.10:FF:000002">
    <property type="entry name" value="30S ribosomal protein S15"/>
    <property type="match status" value="1"/>
</dbReference>
<dbReference type="Gene3D" id="6.10.250.3130">
    <property type="match status" value="1"/>
</dbReference>
<dbReference type="Gene3D" id="1.10.287.10">
    <property type="entry name" value="S15/NS1, RNA-binding"/>
    <property type="match status" value="1"/>
</dbReference>
<dbReference type="HAMAP" id="MF_01343_B">
    <property type="entry name" value="Ribosomal_uS15_B"/>
    <property type="match status" value="1"/>
</dbReference>
<dbReference type="InterPro" id="IPR000589">
    <property type="entry name" value="Ribosomal_uS15"/>
</dbReference>
<dbReference type="InterPro" id="IPR005290">
    <property type="entry name" value="Ribosomal_uS15_bac-type"/>
</dbReference>
<dbReference type="InterPro" id="IPR009068">
    <property type="entry name" value="uS15_NS1_RNA-bd_sf"/>
</dbReference>
<dbReference type="NCBIfam" id="TIGR00952">
    <property type="entry name" value="S15_bact"/>
    <property type="match status" value="1"/>
</dbReference>
<dbReference type="PANTHER" id="PTHR23321">
    <property type="entry name" value="RIBOSOMAL PROTEIN S15, BACTERIAL AND ORGANELLAR"/>
    <property type="match status" value="1"/>
</dbReference>
<dbReference type="PANTHER" id="PTHR23321:SF26">
    <property type="entry name" value="SMALL RIBOSOMAL SUBUNIT PROTEIN US15M"/>
    <property type="match status" value="1"/>
</dbReference>
<dbReference type="Pfam" id="PF00312">
    <property type="entry name" value="Ribosomal_S15"/>
    <property type="match status" value="1"/>
</dbReference>
<dbReference type="SMART" id="SM01387">
    <property type="entry name" value="Ribosomal_S15"/>
    <property type="match status" value="1"/>
</dbReference>
<dbReference type="SUPFAM" id="SSF47060">
    <property type="entry name" value="S15/NS1 RNA-binding domain"/>
    <property type="match status" value="1"/>
</dbReference>
<dbReference type="PROSITE" id="PS00362">
    <property type="entry name" value="RIBOSOMAL_S15"/>
    <property type="match status" value="1"/>
</dbReference>
<accession>Q0T0B6</accession>
<proteinExistence type="inferred from homology"/>
<gene>
    <name evidence="1" type="primary">rpsO</name>
    <name type="ordered locus">SFV_3195</name>
</gene>